<protein>
    <recommendedName>
        <fullName>ATP synthase subunit a, chloroplastic</fullName>
    </recommendedName>
    <alternativeName>
        <fullName>ATP synthase F0 sector subunit a</fullName>
    </alternativeName>
    <alternativeName>
        <fullName>F-ATPase subunit IV</fullName>
    </alternativeName>
</protein>
<organism>
    <name type="scientific">Diacronema lutheri</name>
    <name type="common">Unicellular marine alga</name>
    <name type="synonym">Monochrysis lutheri</name>
    <dbReference type="NCBI Taxonomy" id="2081491"/>
    <lineage>
        <taxon>Eukaryota</taxon>
        <taxon>Haptista</taxon>
        <taxon>Haptophyta</taxon>
        <taxon>Pavlovales</taxon>
        <taxon>Pavlovaceae</taxon>
        <taxon>Diacronema</taxon>
    </lineage>
</organism>
<accession>P28529</accession>
<name>ATPI_DIALT</name>
<reference key="1">
    <citation type="journal article" date="1992" name="FEBS Lett.">
        <title>Characterisation of a chloroplast-encoded secY homologue and atpH from a chromophytic alga. Evidence for a novel chloroplast genome organisation.</title>
        <authorList>
            <person name="Scaramuzzi C.D."/>
            <person name="Stokes H.W."/>
            <person name="Hiller R.G."/>
        </authorList>
    </citation>
    <scope>NUCLEOTIDE SEQUENCE [GENOMIC DNA]</scope>
</reference>
<sequence>ALIFATLSAAYIGEALE</sequence>
<evidence type="ECO:0000250" key="1"/>
<evidence type="ECO:0000305" key="2"/>
<dbReference type="EMBL" id="X64731">
    <property type="protein sequence ID" value="CAA45996.1"/>
    <property type="molecule type" value="Genomic_DNA"/>
</dbReference>
<dbReference type="PIR" id="S23423">
    <property type="entry name" value="S23423"/>
</dbReference>
<dbReference type="GO" id="GO:0009535">
    <property type="term" value="C:chloroplast thylakoid membrane"/>
    <property type="evidence" value="ECO:0007669"/>
    <property type="project" value="UniProtKB-SubCell"/>
</dbReference>
<dbReference type="GO" id="GO:0045259">
    <property type="term" value="C:proton-transporting ATP synthase complex"/>
    <property type="evidence" value="ECO:0007669"/>
    <property type="project" value="UniProtKB-KW"/>
</dbReference>
<dbReference type="GO" id="GO:0006754">
    <property type="term" value="P:ATP biosynthetic process"/>
    <property type="evidence" value="ECO:0007669"/>
    <property type="project" value="UniProtKB-KW"/>
</dbReference>
<dbReference type="GO" id="GO:1902600">
    <property type="term" value="P:proton transmembrane transport"/>
    <property type="evidence" value="ECO:0007669"/>
    <property type="project" value="UniProtKB-KW"/>
</dbReference>
<gene>
    <name type="primary">atpI</name>
</gene>
<proteinExistence type="inferred from homology"/>
<comment type="function">
    <text evidence="1">Key component of the proton channel; it plays a direct role in the translocation of protons across the membrane.</text>
</comment>
<comment type="subunit">
    <text evidence="1">F-type ATPases have 2 components, CF(1) - the catalytic core - and CF(0) - the membrane proton channel. CF(1) has five subunits: alpha(3), beta(3), gamma(1), delta(1), epsilon(1). CF(0) has four main subunits: a, b, b' and c (By similarity).</text>
</comment>
<comment type="subcellular location">
    <subcellularLocation>
        <location evidence="1">Plastid</location>
        <location evidence="1">Chloroplast thylakoid membrane</location>
        <topology evidence="1">Multi-pass membrane protein</topology>
    </subcellularLocation>
</comment>
<comment type="similarity">
    <text evidence="2">Belongs to the ATPase A chain family.</text>
</comment>
<feature type="chain" id="PRO_0000082078" description="ATP synthase subunit a, chloroplastic">
    <location>
        <begin position="1" status="less than"/>
        <end position="17"/>
    </location>
</feature>
<feature type="non-terminal residue">
    <location>
        <position position="1"/>
    </location>
</feature>
<keyword id="KW-0066">ATP synthesis</keyword>
<keyword id="KW-0138">CF(0)</keyword>
<keyword id="KW-0150">Chloroplast</keyword>
<keyword id="KW-0375">Hydrogen ion transport</keyword>
<keyword id="KW-0406">Ion transport</keyword>
<keyword id="KW-0472">Membrane</keyword>
<keyword id="KW-0934">Plastid</keyword>
<keyword id="KW-0793">Thylakoid</keyword>
<keyword id="KW-0812">Transmembrane</keyword>
<keyword id="KW-0813">Transport</keyword>
<geneLocation type="chloroplast"/>